<accession>Q9ZGM4</accession>
<organism>
    <name type="scientific">Legionella pneumophila</name>
    <dbReference type="NCBI Taxonomy" id="446"/>
    <lineage>
        <taxon>Bacteria</taxon>
        <taxon>Pseudomonadati</taxon>
        <taxon>Pseudomonadota</taxon>
        <taxon>Gammaproteobacteria</taxon>
        <taxon>Legionellales</taxon>
        <taxon>Legionellaceae</taxon>
        <taxon>Legionella</taxon>
    </lineage>
</organism>
<protein>
    <recommendedName>
        <fullName evidence="1">Catalase-peroxidase 1</fullName>
        <shortName evidence="1">CP 1</shortName>
        <ecNumber evidence="1">1.11.1.21</ecNumber>
    </recommendedName>
    <alternativeName>
        <fullName evidence="1">Peroxidase/catalase 1</fullName>
    </alternativeName>
</protein>
<dbReference type="EC" id="1.11.1.21" evidence="1"/>
<dbReference type="EMBL" id="AF078110">
    <property type="protein sequence ID" value="AAC64361.1"/>
    <property type="molecule type" value="Genomic_DNA"/>
</dbReference>
<dbReference type="SMR" id="Q9ZGM4"/>
<dbReference type="STRING" id="91892.BIZ52_12025"/>
<dbReference type="eggNOG" id="COG0376">
    <property type="taxonomic scope" value="Bacteria"/>
</dbReference>
<dbReference type="GO" id="GO:0005829">
    <property type="term" value="C:cytosol"/>
    <property type="evidence" value="ECO:0007669"/>
    <property type="project" value="TreeGrafter"/>
</dbReference>
<dbReference type="GO" id="GO:0004096">
    <property type="term" value="F:catalase activity"/>
    <property type="evidence" value="ECO:0007669"/>
    <property type="project" value="UniProtKB-UniRule"/>
</dbReference>
<dbReference type="GO" id="GO:0020037">
    <property type="term" value="F:heme binding"/>
    <property type="evidence" value="ECO:0007669"/>
    <property type="project" value="InterPro"/>
</dbReference>
<dbReference type="GO" id="GO:0046872">
    <property type="term" value="F:metal ion binding"/>
    <property type="evidence" value="ECO:0007669"/>
    <property type="project" value="UniProtKB-KW"/>
</dbReference>
<dbReference type="GO" id="GO:0070301">
    <property type="term" value="P:cellular response to hydrogen peroxide"/>
    <property type="evidence" value="ECO:0007669"/>
    <property type="project" value="TreeGrafter"/>
</dbReference>
<dbReference type="GO" id="GO:0042744">
    <property type="term" value="P:hydrogen peroxide catabolic process"/>
    <property type="evidence" value="ECO:0007669"/>
    <property type="project" value="UniProtKB-KW"/>
</dbReference>
<dbReference type="CDD" id="cd00649">
    <property type="entry name" value="catalase_peroxidase_1"/>
    <property type="match status" value="1"/>
</dbReference>
<dbReference type="FunFam" id="1.10.420.10:FF:000004">
    <property type="entry name" value="Catalase-peroxidase"/>
    <property type="match status" value="1"/>
</dbReference>
<dbReference type="FunFam" id="1.10.520.10:FF:000002">
    <property type="entry name" value="Catalase-peroxidase"/>
    <property type="match status" value="1"/>
</dbReference>
<dbReference type="Gene3D" id="1.10.520.10">
    <property type="match status" value="2"/>
</dbReference>
<dbReference type="Gene3D" id="1.10.420.10">
    <property type="entry name" value="Peroxidase, domain 2"/>
    <property type="match status" value="2"/>
</dbReference>
<dbReference type="HAMAP" id="MF_01961">
    <property type="entry name" value="Catal_peroxid"/>
    <property type="match status" value="1"/>
</dbReference>
<dbReference type="InterPro" id="IPR000763">
    <property type="entry name" value="Catalase_peroxidase"/>
</dbReference>
<dbReference type="InterPro" id="IPR002016">
    <property type="entry name" value="Haem_peroxidase"/>
</dbReference>
<dbReference type="InterPro" id="IPR010255">
    <property type="entry name" value="Haem_peroxidase_sf"/>
</dbReference>
<dbReference type="InterPro" id="IPR019794">
    <property type="entry name" value="Peroxidases_AS"/>
</dbReference>
<dbReference type="NCBIfam" id="TIGR00198">
    <property type="entry name" value="cat_per_HPI"/>
    <property type="match status" value="1"/>
</dbReference>
<dbReference type="NCBIfam" id="NF011635">
    <property type="entry name" value="PRK15061.1"/>
    <property type="match status" value="1"/>
</dbReference>
<dbReference type="PANTHER" id="PTHR30555:SF6">
    <property type="entry name" value="CATALASE-PEROXIDASE"/>
    <property type="match status" value="1"/>
</dbReference>
<dbReference type="PANTHER" id="PTHR30555">
    <property type="entry name" value="HYDROPEROXIDASE I, BIFUNCTIONAL CATALASE-PEROXIDASE"/>
    <property type="match status" value="1"/>
</dbReference>
<dbReference type="Pfam" id="PF00141">
    <property type="entry name" value="peroxidase"/>
    <property type="match status" value="2"/>
</dbReference>
<dbReference type="PRINTS" id="PR00460">
    <property type="entry name" value="BPEROXIDASE"/>
</dbReference>
<dbReference type="PRINTS" id="PR00458">
    <property type="entry name" value="PEROXIDASE"/>
</dbReference>
<dbReference type="SUPFAM" id="SSF48113">
    <property type="entry name" value="Heme-dependent peroxidases"/>
    <property type="match status" value="2"/>
</dbReference>
<dbReference type="PROSITE" id="PS00436">
    <property type="entry name" value="PEROXIDASE_2"/>
    <property type="match status" value="1"/>
</dbReference>
<dbReference type="PROSITE" id="PS50873">
    <property type="entry name" value="PEROXIDASE_4"/>
    <property type="match status" value="1"/>
</dbReference>
<keyword id="KW-0963">Cytoplasm</keyword>
<keyword id="KW-0349">Heme</keyword>
<keyword id="KW-0376">Hydrogen peroxide</keyword>
<keyword id="KW-0408">Iron</keyword>
<keyword id="KW-0479">Metal-binding</keyword>
<keyword id="KW-0560">Oxidoreductase</keyword>
<keyword id="KW-0575">Peroxidase</keyword>
<sequence>MDGKVGSTTTGCPVIHGGMTSTGTSNTAWWPNALNLDILHQHDTKTNPMEKDFNYREEVKKLDFEALKKDLHALMTDSQAWWPADWGHYGGLMIRMSWHAAGSYRVADGRGGAGTGNQRFAPLNSWPDNVNLDKARRLLWPIKKKYGNKISWADLIVLAGTIAYESMGLKTFGFGFGREDIWHPEKDVYWGSEQEWLGAKRYDGKSRESLENPLAAVQMGLIYVNPEGVNGQPDPLRTAQDVRVTFGRMAMNDEETVALTAGGHTVGKCHGNGNAKLLGPNPEAANVEDQGLGWINKTTRGIGRNTVSSGIEGAWTTHPTQWDNGYFYLLLNYDWELKKSPAGAWQWEPIHIKEEDKPVDVEDPAIRHNPIMTDADMAMKMDPVYRKIAERFYQDPDYFAEVFARAWFKLTHRDMGPKTRYIGPDVPKEDLIWQDPVPAGNRAYDIAAAKAKIAASNLTIGEMVSTAWDSARTFRGSDKRGGANGARIRLKPQKDWEGNEPQRLTKVLQILEDIATDTGASVADVIILAGNVGIEKAAKAAGFDIIVPFAPGRGDATDDMTDAESFDVLEPLHDGYRNWLKKTYDVRPEELMLDRTQLMGLTAHEMTVLVGGLRVLGTNHNNTQYGVFTDRVGALTNDFFVNLTDMANVWIPSKDNLYEIRDRKAGNIKWTATRVDLVFGSNSILRSYAEVYAQDDNKGKFIQDFVAAWTKVMNADRFDLA</sequence>
<name>KATG1_LEGPN</name>
<comment type="function">
    <text evidence="1 3">Bifunctional enzyme with both catalase and broad-spectrum peroxidase activity.</text>
</comment>
<comment type="catalytic activity">
    <reaction evidence="1">
        <text>H2O2 + AH2 = A + 2 H2O</text>
        <dbReference type="Rhea" id="RHEA:30275"/>
        <dbReference type="ChEBI" id="CHEBI:13193"/>
        <dbReference type="ChEBI" id="CHEBI:15377"/>
        <dbReference type="ChEBI" id="CHEBI:16240"/>
        <dbReference type="ChEBI" id="CHEBI:17499"/>
        <dbReference type="EC" id="1.11.1.21"/>
    </reaction>
</comment>
<comment type="catalytic activity">
    <reaction evidence="1">
        <text>2 H2O2 = O2 + 2 H2O</text>
        <dbReference type="Rhea" id="RHEA:20309"/>
        <dbReference type="ChEBI" id="CHEBI:15377"/>
        <dbReference type="ChEBI" id="CHEBI:15379"/>
        <dbReference type="ChEBI" id="CHEBI:16240"/>
        <dbReference type="EC" id="1.11.1.21"/>
    </reaction>
</comment>
<comment type="cofactor">
    <cofactor evidence="1">
        <name>heme b</name>
        <dbReference type="ChEBI" id="CHEBI:60344"/>
    </cofactor>
    <text evidence="1">Binds 1 heme b (iron(II)-protoporphyrin IX) group per dimer.</text>
</comment>
<comment type="subunit">
    <text evidence="1">Homodimer or homotetramer.</text>
</comment>
<comment type="subcellular location">
    <subcellularLocation>
        <location evidence="2">Cytoplasm</location>
    </subcellularLocation>
</comment>
<comment type="induction">
    <text evidence="3">Induced during exponential growth.</text>
</comment>
<comment type="PTM">
    <text evidence="1">Formation of the three residue Trp-Tyr-Met cross-link is important for the catalase, but not the peroxidase activity of the enzyme.</text>
</comment>
<comment type="similarity">
    <text evidence="1">Belongs to the peroxidase family. Peroxidase/catalase subfamily.</text>
</comment>
<gene>
    <name evidence="1" type="primary">katG1</name>
    <name type="synonym">katB</name>
</gene>
<evidence type="ECO:0000255" key="1">
    <source>
        <dbReference type="HAMAP-Rule" id="MF_01961"/>
    </source>
</evidence>
<evidence type="ECO:0000269" key="2">
    <source>
    </source>
</evidence>
<evidence type="ECO:0000269" key="3">
    <source>
    </source>
</evidence>
<reference key="1">
    <citation type="journal article" date="1998" name="J. Bacteriol.">
        <title>Legionella pneumophila catalase-peroxidases: cloning of the katB gene and studies of KatB function.</title>
        <authorList>
            <person name="Bandyopadhyay P."/>
            <person name="Steinman H.M."/>
        </authorList>
    </citation>
    <scope>NUCLEOTIDE SEQUENCE [GENOMIC DNA]</scope>
    <scope>FUNCTION</scope>
    <scope>INDUCTION</scope>
    <source>
        <strain>JR32</strain>
    </source>
</reference>
<reference key="2">
    <citation type="journal article" date="2000" name="J. Bacteriol.">
        <title>Catalase-peroxidases of Legionella pneumophila: cloning of the katA gene and studies of KatA function.</title>
        <authorList>
            <person name="Bandyopadhyay P."/>
            <person name="Steinman H.M."/>
        </authorList>
    </citation>
    <scope>SUBCELLULAR LOCATION</scope>
    <source>
        <strain>JR32</strain>
    </source>
</reference>
<proteinExistence type="evidence at transcript level"/>
<feature type="chain" id="PRO_0000354815" description="Catalase-peroxidase 1">
    <location>
        <begin position="1"/>
        <end position="721"/>
    </location>
</feature>
<feature type="active site" description="Proton acceptor" evidence="1">
    <location>
        <position position="99"/>
    </location>
</feature>
<feature type="binding site" description="axial binding residue" evidence="1">
    <location>
        <position position="264"/>
    </location>
    <ligand>
        <name>heme b</name>
        <dbReference type="ChEBI" id="CHEBI:60344"/>
    </ligand>
    <ligandPart>
        <name>Fe</name>
        <dbReference type="ChEBI" id="CHEBI:18248"/>
    </ligandPart>
</feature>
<feature type="site" description="Transition state stabilizer" evidence="1">
    <location>
        <position position="95"/>
    </location>
</feature>
<feature type="cross-link" description="Tryptophyl-tyrosyl-methioninium (Trp-Tyr) (with M-249)" evidence="1">
    <location>
        <begin position="98"/>
        <end position="223"/>
    </location>
</feature>
<feature type="cross-link" description="Tryptophyl-tyrosyl-methioninium (Tyr-Met) (with W-98)" evidence="1">
    <location>
        <begin position="223"/>
        <end position="249"/>
    </location>
</feature>